<reference key="1">
    <citation type="journal article" date="1999" name="Nat. Genet.">
        <title>Comparative genomes of Chlamydia pneumoniae and C. trachomatis.</title>
        <authorList>
            <person name="Kalman S."/>
            <person name="Mitchell W.P."/>
            <person name="Marathe R."/>
            <person name="Lammel C.J."/>
            <person name="Fan J."/>
            <person name="Hyman R.W."/>
            <person name="Olinger L."/>
            <person name="Grimwood J."/>
            <person name="Davis R.W."/>
            <person name="Stephens R.S."/>
        </authorList>
    </citation>
    <scope>NUCLEOTIDE SEQUENCE [LARGE SCALE GENOMIC DNA]</scope>
    <source>
        <strain>CWL029</strain>
    </source>
</reference>
<reference key="2">
    <citation type="journal article" date="2000" name="Nucleic Acids Res.">
        <title>Genome sequences of Chlamydia trachomatis MoPn and Chlamydia pneumoniae AR39.</title>
        <authorList>
            <person name="Read T.D."/>
            <person name="Brunham R.C."/>
            <person name="Shen C."/>
            <person name="Gill S.R."/>
            <person name="Heidelberg J.F."/>
            <person name="White O."/>
            <person name="Hickey E.K."/>
            <person name="Peterson J.D."/>
            <person name="Utterback T.R."/>
            <person name="Berry K.J."/>
            <person name="Bass S."/>
            <person name="Linher K.D."/>
            <person name="Weidman J.F."/>
            <person name="Khouri H.M."/>
            <person name="Craven B."/>
            <person name="Bowman C."/>
            <person name="Dodson R.J."/>
            <person name="Gwinn M.L."/>
            <person name="Nelson W.C."/>
            <person name="DeBoy R.T."/>
            <person name="Kolonay J.F."/>
            <person name="McClarty G."/>
            <person name="Salzberg S.L."/>
            <person name="Eisen J.A."/>
            <person name="Fraser C.M."/>
        </authorList>
    </citation>
    <scope>NUCLEOTIDE SEQUENCE [LARGE SCALE GENOMIC DNA]</scope>
    <source>
        <strain>AR39</strain>
    </source>
</reference>
<reference key="3">
    <citation type="journal article" date="2000" name="Nucleic Acids Res.">
        <title>Comparison of whole genome sequences of Chlamydia pneumoniae J138 from Japan and CWL029 from USA.</title>
        <authorList>
            <person name="Shirai M."/>
            <person name="Hirakawa H."/>
            <person name="Kimoto M."/>
            <person name="Tabuchi M."/>
            <person name="Kishi F."/>
            <person name="Ouchi K."/>
            <person name="Shiba T."/>
            <person name="Ishii K."/>
            <person name="Hattori M."/>
            <person name="Kuhara S."/>
            <person name="Nakazawa T."/>
        </authorList>
    </citation>
    <scope>NUCLEOTIDE SEQUENCE [LARGE SCALE GENOMIC DNA]</scope>
    <source>
        <strain>J138</strain>
    </source>
</reference>
<reference key="4">
    <citation type="submission" date="2002-05" db="EMBL/GenBank/DDBJ databases">
        <title>The genome sequence of Chlamydia pneumoniae TW183 and comparison with other Chlamydia strains based on whole genome sequence analysis.</title>
        <authorList>
            <person name="Geng M.M."/>
            <person name="Schuhmacher A."/>
            <person name="Muehldorfer I."/>
            <person name="Bensch K.W."/>
            <person name="Schaefer K.P."/>
            <person name="Schneider S."/>
            <person name="Pohl T."/>
            <person name="Essig A."/>
            <person name="Marre R."/>
            <person name="Melchers K."/>
        </authorList>
    </citation>
    <scope>NUCLEOTIDE SEQUENCE [LARGE SCALE GENOMIC DNA]</scope>
    <source>
        <strain>TW-183</strain>
    </source>
</reference>
<evidence type="ECO:0000250" key="1">
    <source>
        <dbReference type="UniProtKB" id="P00362"/>
    </source>
</evidence>
<evidence type="ECO:0000250" key="2">
    <source>
        <dbReference type="UniProtKB" id="P09124"/>
    </source>
</evidence>
<evidence type="ECO:0000305" key="3"/>
<dbReference type="EC" id="1.2.1.12" evidence="2"/>
<dbReference type="EMBL" id="AE001363">
    <property type="protein sequence ID" value="AAD18763.1"/>
    <property type="molecule type" value="Genomic_DNA"/>
</dbReference>
<dbReference type="EMBL" id="AE002161">
    <property type="protein sequence ID" value="AAF38006.1"/>
    <property type="molecule type" value="Genomic_DNA"/>
</dbReference>
<dbReference type="EMBL" id="BA000008">
    <property type="protein sequence ID" value="BAA98831.1"/>
    <property type="molecule type" value="Genomic_DNA"/>
</dbReference>
<dbReference type="EMBL" id="AE009440">
    <property type="protein sequence ID" value="AAP98579.1"/>
    <property type="molecule type" value="Genomic_DNA"/>
</dbReference>
<dbReference type="PIR" id="B72053">
    <property type="entry name" value="B72053"/>
</dbReference>
<dbReference type="PIR" id="E86568">
    <property type="entry name" value="E86568"/>
</dbReference>
<dbReference type="RefSeq" id="NP_224820.1">
    <property type="nucleotide sequence ID" value="NC_000922.1"/>
</dbReference>
<dbReference type="RefSeq" id="WP_010883262.1">
    <property type="nucleotide sequence ID" value="NZ_LN847257.1"/>
</dbReference>
<dbReference type="SMR" id="Q9Z7T0"/>
<dbReference type="STRING" id="406984.CPK_ORF00024"/>
<dbReference type="GeneID" id="45050674"/>
<dbReference type="KEGG" id="cpa:CP_0123"/>
<dbReference type="KEGG" id="cpj:gapA"/>
<dbReference type="KEGG" id="cpn:CPn_0624"/>
<dbReference type="KEGG" id="cpt:CpB0650"/>
<dbReference type="PATRIC" id="fig|115713.3.peg.694"/>
<dbReference type="eggNOG" id="COG0057">
    <property type="taxonomic scope" value="Bacteria"/>
</dbReference>
<dbReference type="HOGENOM" id="CLU_030140_0_3_0"/>
<dbReference type="OrthoDB" id="9803304at2"/>
<dbReference type="UniPathway" id="UPA00109">
    <property type="reaction ID" value="UER00184"/>
</dbReference>
<dbReference type="Proteomes" id="UP000000583">
    <property type="component" value="Chromosome"/>
</dbReference>
<dbReference type="Proteomes" id="UP000000801">
    <property type="component" value="Chromosome"/>
</dbReference>
<dbReference type="GO" id="GO:0005737">
    <property type="term" value="C:cytoplasm"/>
    <property type="evidence" value="ECO:0007669"/>
    <property type="project" value="UniProtKB-SubCell"/>
</dbReference>
<dbReference type="GO" id="GO:0004365">
    <property type="term" value="F:glyceraldehyde-3-phosphate dehydrogenase (NAD+) (phosphorylating) activity"/>
    <property type="evidence" value="ECO:0000250"/>
    <property type="project" value="UniProtKB"/>
</dbReference>
<dbReference type="GO" id="GO:0051287">
    <property type="term" value="F:NAD binding"/>
    <property type="evidence" value="ECO:0000250"/>
    <property type="project" value="UniProtKB"/>
</dbReference>
<dbReference type="GO" id="GO:0050661">
    <property type="term" value="F:NADP binding"/>
    <property type="evidence" value="ECO:0007669"/>
    <property type="project" value="InterPro"/>
</dbReference>
<dbReference type="GO" id="GO:0006006">
    <property type="term" value="P:glucose metabolic process"/>
    <property type="evidence" value="ECO:0007669"/>
    <property type="project" value="InterPro"/>
</dbReference>
<dbReference type="GO" id="GO:0006096">
    <property type="term" value="P:glycolytic process"/>
    <property type="evidence" value="ECO:0007669"/>
    <property type="project" value="UniProtKB-UniPathway"/>
</dbReference>
<dbReference type="CDD" id="cd18126">
    <property type="entry name" value="GAPDH_I_C"/>
    <property type="match status" value="1"/>
</dbReference>
<dbReference type="CDD" id="cd05214">
    <property type="entry name" value="GAPDH_I_N"/>
    <property type="match status" value="1"/>
</dbReference>
<dbReference type="FunFam" id="3.30.360.10:FF:000001">
    <property type="entry name" value="Glyceraldehyde-3-phosphate dehydrogenase"/>
    <property type="match status" value="1"/>
</dbReference>
<dbReference type="FunFam" id="3.40.50.720:FF:000001">
    <property type="entry name" value="Glyceraldehyde-3-phosphate dehydrogenase"/>
    <property type="match status" value="1"/>
</dbReference>
<dbReference type="Gene3D" id="3.30.360.10">
    <property type="entry name" value="Dihydrodipicolinate Reductase, domain 2"/>
    <property type="match status" value="1"/>
</dbReference>
<dbReference type="Gene3D" id="3.40.50.720">
    <property type="entry name" value="NAD(P)-binding Rossmann-like Domain"/>
    <property type="match status" value="1"/>
</dbReference>
<dbReference type="InterPro" id="IPR020831">
    <property type="entry name" value="GlycerAld/Erythrose_P_DH"/>
</dbReference>
<dbReference type="InterPro" id="IPR020830">
    <property type="entry name" value="GlycerAld_3-P_DH_AS"/>
</dbReference>
<dbReference type="InterPro" id="IPR020829">
    <property type="entry name" value="GlycerAld_3-P_DH_cat"/>
</dbReference>
<dbReference type="InterPro" id="IPR020828">
    <property type="entry name" value="GlycerAld_3-P_DH_NAD(P)-bd"/>
</dbReference>
<dbReference type="InterPro" id="IPR006424">
    <property type="entry name" value="Glyceraldehyde-3-P_DH_1"/>
</dbReference>
<dbReference type="InterPro" id="IPR036291">
    <property type="entry name" value="NAD(P)-bd_dom_sf"/>
</dbReference>
<dbReference type="NCBIfam" id="TIGR01534">
    <property type="entry name" value="GAPDH-I"/>
    <property type="match status" value="1"/>
</dbReference>
<dbReference type="PANTHER" id="PTHR10836">
    <property type="entry name" value="GLYCERALDEHYDE 3-PHOSPHATE DEHYDROGENASE"/>
    <property type="match status" value="1"/>
</dbReference>
<dbReference type="PANTHER" id="PTHR10836:SF76">
    <property type="entry name" value="GLYCERALDEHYDE-3-PHOSPHATE DEHYDROGENASE-RELATED"/>
    <property type="match status" value="1"/>
</dbReference>
<dbReference type="Pfam" id="PF02800">
    <property type="entry name" value="Gp_dh_C"/>
    <property type="match status" value="1"/>
</dbReference>
<dbReference type="Pfam" id="PF00044">
    <property type="entry name" value="Gp_dh_N"/>
    <property type="match status" value="1"/>
</dbReference>
<dbReference type="PIRSF" id="PIRSF000149">
    <property type="entry name" value="GAP_DH"/>
    <property type="match status" value="1"/>
</dbReference>
<dbReference type="PRINTS" id="PR00078">
    <property type="entry name" value="G3PDHDRGNASE"/>
</dbReference>
<dbReference type="SMART" id="SM00846">
    <property type="entry name" value="Gp_dh_N"/>
    <property type="match status" value="1"/>
</dbReference>
<dbReference type="SUPFAM" id="SSF55347">
    <property type="entry name" value="Glyceraldehyde-3-phosphate dehydrogenase-like, C-terminal domain"/>
    <property type="match status" value="1"/>
</dbReference>
<dbReference type="SUPFAM" id="SSF51735">
    <property type="entry name" value="NAD(P)-binding Rossmann-fold domains"/>
    <property type="match status" value="1"/>
</dbReference>
<dbReference type="PROSITE" id="PS00071">
    <property type="entry name" value="GAPDH"/>
    <property type="match status" value="1"/>
</dbReference>
<comment type="function">
    <text evidence="1">Catalyzes the oxidative phosphorylation of glyceraldehyde 3-phosphate (G3P) to 1,3-bisphosphoglycerate (BPG) using the cofactor NAD. The first reaction step involves the formation of a hemiacetal intermediate between G3P and a cysteine residue, and this hemiacetal intermediate is then oxidized to a thioester, with concomitant reduction of NAD to NADH. The reduced NADH is then exchanged with the second NAD, and the thioester is attacked by a nucleophilic inorganic phosphate to produce BPG.</text>
</comment>
<comment type="catalytic activity">
    <reaction evidence="2">
        <text>D-glyceraldehyde 3-phosphate + phosphate + NAD(+) = (2R)-3-phospho-glyceroyl phosphate + NADH + H(+)</text>
        <dbReference type="Rhea" id="RHEA:10300"/>
        <dbReference type="ChEBI" id="CHEBI:15378"/>
        <dbReference type="ChEBI" id="CHEBI:43474"/>
        <dbReference type="ChEBI" id="CHEBI:57540"/>
        <dbReference type="ChEBI" id="CHEBI:57604"/>
        <dbReference type="ChEBI" id="CHEBI:57945"/>
        <dbReference type="ChEBI" id="CHEBI:59776"/>
        <dbReference type="EC" id="1.2.1.12"/>
    </reaction>
</comment>
<comment type="pathway">
    <text evidence="3">Carbohydrate degradation; glycolysis; pyruvate from D-glyceraldehyde 3-phosphate: step 1/5.</text>
</comment>
<comment type="subunit">
    <text evidence="1">Homotetramer.</text>
</comment>
<comment type="subcellular location">
    <subcellularLocation>
        <location evidence="3">Cytoplasm</location>
    </subcellularLocation>
</comment>
<comment type="similarity">
    <text evidence="3">Belongs to the glyceraldehyde-3-phosphate dehydrogenase family.</text>
</comment>
<organism>
    <name type="scientific">Chlamydia pneumoniae</name>
    <name type="common">Chlamydophila pneumoniae</name>
    <dbReference type="NCBI Taxonomy" id="83558"/>
    <lineage>
        <taxon>Bacteria</taxon>
        <taxon>Pseudomonadati</taxon>
        <taxon>Chlamydiota</taxon>
        <taxon>Chlamydiia</taxon>
        <taxon>Chlamydiales</taxon>
        <taxon>Chlamydiaceae</taxon>
        <taxon>Chlamydia/Chlamydophila group</taxon>
        <taxon>Chlamydia</taxon>
    </lineage>
</organism>
<proteinExistence type="inferred from homology"/>
<sequence length="335" mass="36837">MKVVINGFGRIGRLVLRQILKRNSSVEVLAINDLVPGDALTYLFKFDSTHGRFPEDVRCEADHLIVGKRKIQFLSERNVQNLPWKDLGVDLVIECTGLFTKKEDAEKHIQAGAKRVLISAPGKGDIPTFVMGVNHKTFNPEKDFVISNASCTTNCLAPIAKVLLDNFGITEGLMTTVHAATATQLVVDGPSKKDWRGGRGCLQNIIPASTGAAKAVTLCLPELKGKLTGMAFRVPIEDVSVVDLTVRLDKSTTYDDICKAMKQASETDLKGILDYTDEQVVSSDFIGSEYSSIFDALAGIALNDRFFKLVAWYDNETGYATRIVDLLEYVEKNSK</sequence>
<gene>
    <name type="primary">gap</name>
    <name type="synonym">gapA</name>
    <name type="ordered locus">CPn_0624</name>
    <name type="ordered locus">CP_0123</name>
    <name type="ordered locus">CpB0650</name>
</gene>
<name>G3P_CHLPN</name>
<feature type="chain" id="PRO_0000145642" description="Glyceraldehyde-3-phosphate dehydrogenase">
    <location>
        <begin position="1"/>
        <end position="335"/>
    </location>
</feature>
<feature type="active site" description="Nucleophile" evidence="1">
    <location>
        <position position="151"/>
    </location>
</feature>
<feature type="binding site" evidence="1">
    <location>
        <begin position="10"/>
        <end position="11"/>
    </location>
    <ligand>
        <name>NAD(+)</name>
        <dbReference type="ChEBI" id="CHEBI:57540"/>
    </ligand>
</feature>
<feature type="binding site" evidence="1">
    <location>
        <position position="33"/>
    </location>
    <ligand>
        <name>NAD(+)</name>
        <dbReference type="ChEBI" id="CHEBI:57540"/>
    </ligand>
</feature>
<feature type="binding site" evidence="1">
    <location>
        <position position="77"/>
    </location>
    <ligand>
        <name>NAD(+)</name>
        <dbReference type="ChEBI" id="CHEBI:57540"/>
    </ligand>
</feature>
<feature type="binding site" evidence="1">
    <location>
        <position position="119"/>
    </location>
    <ligand>
        <name>NAD(+)</name>
        <dbReference type="ChEBI" id="CHEBI:57540"/>
    </ligand>
</feature>
<feature type="binding site" evidence="1">
    <location>
        <begin position="150"/>
        <end position="152"/>
    </location>
    <ligand>
        <name>D-glyceraldehyde 3-phosphate</name>
        <dbReference type="ChEBI" id="CHEBI:59776"/>
    </ligand>
</feature>
<feature type="binding site" evidence="1">
    <location>
        <position position="181"/>
    </location>
    <ligand>
        <name>D-glyceraldehyde 3-phosphate</name>
        <dbReference type="ChEBI" id="CHEBI:59776"/>
    </ligand>
</feature>
<feature type="binding site" evidence="1">
    <location>
        <begin position="210"/>
        <end position="211"/>
    </location>
    <ligand>
        <name>D-glyceraldehyde 3-phosphate</name>
        <dbReference type="ChEBI" id="CHEBI:59776"/>
    </ligand>
</feature>
<feature type="binding site" evidence="1">
    <location>
        <position position="233"/>
    </location>
    <ligand>
        <name>D-glyceraldehyde 3-phosphate</name>
        <dbReference type="ChEBI" id="CHEBI:59776"/>
    </ligand>
</feature>
<feature type="binding site" evidence="1">
    <location>
        <position position="315"/>
    </location>
    <ligand>
        <name>NAD(+)</name>
        <dbReference type="ChEBI" id="CHEBI:57540"/>
    </ligand>
</feature>
<feature type="site" description="Activates thiol group during catalysis" evidence="1">
    <location>
        <position position="178"/>
    </location>
</feature>
<protein>
    <recommendedName>
        <fullName evidence="1">Glyceraldehyde-3-phosphate dehydrogenase</fullName>
        <shortName evidence="1">GAPDH</shortName>
        <ecNumber evidence="2">1.2.1.12</ecNumber>
    </recommendedName>
    <alternativeName>
        <fullName evidence="1">NAD-dependent glyceraldehyde-3-phosphate dehydrogenase</fullName>
    </alternativeName>
</protein>
<accession>Q9Z7T0</accession>
<accession>Q9JQH7</accession>
<keyword id="KW-0963">Cytoplasm</keyword>
<keyword id="KW-0324">Glycolysis</keyword>
<keyword id="KW-0520">NAD</keyword>
<keyword id="KW-0547">Nucleotide-binding</keyword>
<keyword id="KW-0560">Oxidoreductase</keyword>